<accession>P0DTG2</accession>
<dbReference type="EMBL" id="AWHC01018092">
    <property type="status" value="NOT_ANNOTATED_CDS"/>
    <property type="molecule type" value="Genomic_DNA"/>
</dbReference>
<dbReference type="SMR" id="P0DTG2"/>
<dbReference type="GO" id="GO:0034364">
    <property type="term" value="C:high-density lipoprotein particle"/>
    <property type="evidence" value="ECO:0007669"/>
    <property type="project" value="TreeGrafter"/>
</dbReference>
<dbReference type="GO" id="GO:0034361">
    <property type="term" value="C:very-low-density lipoprotein particle"/>
    <property type="evidence" value="ECO:0007669"/>
    <property type="project" value="UniProtKB-KW"/>
</dbReference>
<dbReference type="GO" id="GO:0005504">
    <property type="term" value="F:fatty acid binding"/>
    <property type="evidence" value="ECO:0007669"/>
    <property type="project" value="TreeGrafter"/>
</dbReference>
<dbReference type="GO" id="GO:0004859">
    <property type="term" value="F:phospholipase inhibitor activity"/>
    <property type="evidence" value="ECO:0007669"/>
    <property type="project" value="TreeGrafter"/>
</dbReference>
<dbReference type="GO" id="GO:0006869">
    <property type="term" value="P:lipid transport"/>
    <property type="evidence" value="ECO:0007669"/>
    <property type="project" value="UniProtKB-KW"/>
</dbReference>
<dbReference type="GO" id="GO:0042157">
    <property type="term" value="P:lipoprotein metabolic process"/>
    <property type="evidence" value="ECO:0007669"/>
    <property type="project" value="InterPro"/>
</dbReference>
<dbReference type="GO" id="GO:0032375">
    <property type="term" value="P:negative regulation of cholesterol transport"/>
    <property type="evidence" value="ECO:0007669"/>
    <property type="project" value="TreeGrafter"/>
</dbReference>
<dbReference type="GO" id="GO:0050995">
    <property type="term" value="P:negative regulation of lipid catabolic process"/>
    <property type="evidence" value="ECO:0007669"/>
    <property type="project" value="TreeGrafter"/>
</dbReference>
<dbReference type="GO" id="GO:0010916">
    <property type="term" value="P:negative regulation of very-low-density lipoprotein particle clearance"/>
    <property type="evidence" value="ECO:0007669"/>
    <property type="project" value="TreeGrafter"/>
</dbReference>
<dbReference type="GO" id="GO:0006641">
    <property type="term" value="P:triglyceride metabolic process"/>
    <property type="evidence" value="ECO:0007669"/>
    <property type="project" value="TreeGrafter"/>
</dbReference>
<dbReference type="GO" id="GO:0034447">
    <property type="term" value="P:very-low-density lipoprotein particle clearance"/>
    <property type="evidence" value="ECO:0007669"/>
    <property type="project" value="TreeGrafter"/>
</dbReference>
<dbReference type="Gene3D" id="4.10.260.30">
    <property type="entry name" value="Apolipoprotein C-I"/>
    <property type="match status" value="1"/>
</dbReference>
<dbReference type="InterPro" id="IPR043081">
    <property type="entry name" value="ApoC-1_sf"/>
</dbReference>
<dbReference type="InterPro" id="IPR006781">
    <property type="entry name" value="ApoC-I"/>
</dbReference>
<dbReference type="PANTHER" id="PTHR16565">
    <property type="entry name" value="APOLIPOPROTEIN C-I"/>
    <property type="match status" value="1"/>
</dbReference>
<dbReference type="PANTHER" id="PTHR16565:SF2">
    <property type="entry name" value="APOLIPOPROTEIN C-I"/>
    <property type="match status" value="1"/>
</dbReference>
<dbReference type="Pfam" id="PF04691">
    <property type="entry name" value="ApoC-I"/>
    <property type="match status" value="1"/>
</dbReference>
<proteinExistence type="inferred from homology"/>
<keyword id="KW-0445">Lipid transport</keyword>
<keyword id="KW-0964">Secreted</keyword>
<keyword id="KW-0732">Signal</keyword>
<keyword id="KW-0813">Transport</keyword>
<keyword id="KW-0850">VLDL</keyword>
<evidence type="ECO:0000250" key="1">
    <source>
        <dbReference type="UniProtKB" id="P02654"/>
    </source>
</evidence>
<evidence type="ECO:0000250" key="2">
    <source>
        <dbReference type="UniProtKB" id="P33047"/>
    </source>
</evidence>
<evidence type="ECO:0000250" key="3">
    <source>
        <dbReference type="UniProtKB" id="P86336"/>
    </source>
</evidence>
<evidence type="ECO:0000255" key="4"/>
<evidence type="ECO:0000305" key="5"/>
<name>APOC1_EIDHE</name>
<reference key="1">
    <citation type="journal article" date="2013" name="Nature">
        <title>Genome-wide signatures of convergent evolution in echolocating mammals.</title>
        <authorList>
            <person name="Parker J."/>
            <person name="Tsagkogeorga G."/>
            <person name="Cotton J.A."/>
            <person name="Liu Y."/>
            <person name="Provero P."/>
            <person name="Stupka E."/>
            <person name="Rossiter S.J."/>
        </authorList>
    </citation>
    <scope>NUCLEOTIDE SEQUENCE [LARGE SCALE GENOMIC DNA]</scope>
</reference>
<reference key="2">
    <citation type="unpublished observations" date="2021-01">
        <authorList>
            <person name="Puppione D.L."/>
        </authorList>
    </citation>
    <scope>IDENTIFICATION</scope>
</reference>
<gene>
    <name type="primary">APOC1</name>
</gene>
<organism>
    <name type="scientific">Eidolon helvum</name>
    <name type="common">Straw-colored fruit bat</name>
    <dbReference type="NCBI Taxonomy" id="77214"/>
    <lineage>
        <taxon>Eukaryota</taxon>
        <taxon>Metazoa</taxon>
        <taxon>Chordata</taxon>
        <taxon>Craniata</taxon>
        <taxon>Vertebrata</taxon>
        <taxon>Euteleostomi</taxon>
        <taxon>Mammalia</taxon>
        <taxon>Eutheria</taxon>
        <taxon>Laurasiatheria</taxon>
        <taxon>Chiroptera</taxon>
        <taxon>Yinpterochiroptera</taxon>
        <taxon>Pteropodoidea</taxon>
        <taxon>Pteropodidae</taxon>
        <taxon>Pteropodinae</taxon>
        <taxon>Eidolon</taxon>
    </lineage>
</organism>
<comment type="function">
    <text evidence="1 2">Inhibitor of lipoprotein binding to the low density lipoprotein (LDL) receptor, LDL receptor-related protein, and very low density lipoprotein (VLDL) receptor. Associates with high density lipoproteins (HDL) and the triacylglycerol-rich lipoproteins in the plasma and makes up about 10% of the protein of the VLDL and 2% of that of HDL. Appears to interfere directly with fatty acid uptake and is also the major plasma inhibitor of cholesteryl ester transfer protein (CETP). Binds free fatty acids and reduces their intracellular esterification. Modulates the interaction of APOE with beta-migrating VLDL and inhibits binding of beta-VLDL to the LDL receptor-related protein.</text>
</comment>
<comment type="subcellular location">
    <subcellularLocation>
        <location evidence="1">Secreted</location>
    </subcellularLocation>
</comment>
<comment type="similarity">
    <text evidence="5">Belongs to the apolipoprotein C1 family.</text>
</comment>
<protein>
    <recommendedName>
        <fullName>Apolipoprotein C-I</fullName>
        <shortName>Apo-CI</shortName>
        <shortName>ApoC-I</shortName>
    </recommendedName>
    <alternativeName>
        <fullName>Apolipoprotein C1</fullName>
    </alternativeName>
    <component>
        <recommendedName>
            <fullName>Truncated apolipoprotein C-I</fullName>
        </recommendedName>
    </component>
</protein>
<feature type="signal peptide" evidence="4">
    <location>
        <begin position="1"/>
        <end position="26"/>
    </location>
</feature>
<feature type="chain" id="PRO_0000452409" description="Apolipoprotein C-I">
    <location>
        <begin position="27"/>
        <end position="88"/>
    </location>
</feature>
<feature type="chain" id="PRO_0000452410" description="Truncated apolipoprotein C-I" evidence="3">
    <location>
        <begin position="29"/>
        <end position="88"/>
    </location>
</feature>
<sequence length="88" mass="9729">MRLILSLPVLAVVLAMVLEGPAPAQATTDVSSTSESILGKLKEFGSTVEEKVRTAIDQIKKSNVPEKTKNWFSEVFQKVKEKFETTFS</sequence>